<dbReference type="EC" id="6.3.3.1" evidence="1"/>
<dbReference type="EMBL" id="CP000851">
    <property type="protein sequence ID" value="ABV87897.1"/>
    <property type="molecule type" value="Genomic_DNA"/>
</dbReference>
<dbReference type="RefSeq" id="WP_012155803.1">
    <property type="nucleotide sequence ID" value="NC_009901.1"/>
</dbReference>
<dbReference type="SMR" id="A8H5R0"/>
<dbReference type="STRING" id="398579.Spea_2577"/>
<dbReference type="KEGG" id="spl:Spea_2577"/>
<dbReference type="eggNOG" id="COG0150">
    <property type="taxonomic scope" value="Bacteria"/>
</dbReference>
<dbReference type="HOGENOM" id="CLU_047116_0_0_6"/>
<dbReference type="OrthoDB" id="9777881at2"/>
<dbReference type="UniPathway" id="UPA00074">
    <property type="reaction ID" value="UER00129"/>
</dbReference>
<dbReference type="Proteomes" id="UP000002608">
    <property type="component" value="Chromosome"/>
</dbReference>
<dbReference type="GO" id="GO:0005829">
    <property type="term" value="C:cytosol"/>
    <property type="evidence" value="ECO:0007669"/>
    <property type="project" value="TreeGrafter"/>
</dbReference>
<dbReference type="GO" id="GO:0005524">
    <property type="term" value="F:ATP binding"/>
    <property type="evidence" value="ECO:0007669"/>
    <property type="project" value="UniProtKB-KW"/>
</dbReference>
<dbReference type="GO" id="GO:0004637">
    <property type="term" value="F:phosphoribosylamine-glycine ligase activity"/>
    <property type="evidence" value="ECO:0007669"/>
    <property type="project" value="TreeGrafter"/>
</dbReference>
<dbReference type="GO" id="GO:0004641">
    <property type="term" value="F:phosphoribosylformylglycinamidine cyclo-ligase activity"/>
    <property type="evidence" value="ECO:0007669"/>
    <property type="project" value="UniProtKB-UniRule"/>
</dbReference>
<dbReference type="GO" id="GO:0006189">
    <property type="term" value="P:'de novo' IMP biosynthetic process"/>
    <property type="evidence" value="ECO:0007669"/>
    <property type="project" value="UniProtKB-UniRule"/>
</dbReference>
<dbReference type="GO" id="GO:0046084">
    <property type="term" value="P:adenine biosynthetic process"/>
    <property type="evidence" value="ECO:0007669"/>
    <property type="project" value="TreeGrafter"/>
</dbReference>
<dbReference type="CDD" id="cd02196">
    <property type="entry name" value="PurM"/>
    <property type="match status" value="1"/>
</dbReference>
<dbReference type="FunFam" id="3.30.1330.10:FF:000001">
    <property type="entry name" value="Phosphoribosylformylglycinamidine cyclo-ligase"/>
    <property type="match status" value="1"/>
</dbReference>
<dbReference type="FunFam" id="3.90.650.10:FF:000001">
    <property type="entry name" value="Phosphoribosylformylglycinamidine cyclo-ligase"/>
    <property type="match status" value="1"/>
</dbReference>
<dbReference type="Gene3D" id="3.90.650.10">
    <property type="entry name" value="PurM-like C-terminal domain"/>
    <property type="match status" value="1"/>
</dbReference>
<dbReference type="Gene3D" id="3.30.1330.10">
    <property type="entry name" value="PurM-like, N-terminal domain"/>
    <property type="match status" value="1"/>
</dbReference>
<dbReference type="HAMAP" id="MF_00741">
    <property type="entry name" value="AIRS"/>
    <property type="match status" value="1"/>
</dbReference>
<dbReference type="InterPro" id="IPR010918">
    <property type="entry name" value="PurM-like_C_dom"/>
</dbReference>
<dbReference type="InterPro" id="IPR036676">
    <property type="entry name" value="PurM-like_C_sf"/>
</dbReference>
<dbReference type="InterPro" id="IPR016188">
    <property type="entry name" value="PurM-like_N"/>
</dbReference>
<dbReference type="InterPro" id="IPR036921">
    <property type="entry name" value="PurM-like_N_sf"/>
</dbReference>
<dbReference type="InterPro" id="IPR004733">
    <property type="entry name" value="PurM_cligase"/>
</dbReference>
<dbReference type="NCBIfam" id="TIGR00878">
    <property type="entry name" value="purM"/>
    <property type="match status" value="1"/>
</dbReference>
<dbReference type="PANTHER" id="PTHR10520:SF12">
    <property type="entry name" value="TRIFUNCTIONAL PURINE BIOSYNTHETIC PROTEIN ADENOSINE-3"/>
    <property type="match status" value="1"/>
</dbReference>
<dbReference type="PANTHER" id="PTHR10520">
    <property type="entry name" value="TRIFUNCTIONAL PURINE BIOSYNTHETIC PROTEIN ADENOSINE-3-RELATED"/>
    <property type="match status" value="1"/>
</dbReference>
<dbReference type="Pfam" id="PF00586">
    <property type="entry name" value="AIRS"/>
    <property type="match status" value="1"/>
</dbReference>
<dbReference type="Pfam" id="PF02769">
    <property type="entry name" value="AIRS_C"/>
    <property type="match status" value="1"/>
</dbReference>
<dbReference type="SUPFAM" id="SSF56042">
    <property type="entry name" value="PurM C-terminal domain-like"/>
    <property type="match status" value="1"/>
</dbReference>
<dbReference type="SUPFAM" id="SSF55326">
    <property type="entry name" value="PurM N-terminal domain-like"/>
    <property type="match status" value="1"/>
</dbReference>
<comment type="catalytic activity">
    <reaction evidence="1">
        <text>2-formamido-N(1)-(5-O-phospho-beta-D-ribosyl)acetamidine + ATP = 5-amino-1-(5-phospho-beta-D-ribosyl)imidazole + ADP + phosphate + H(+)</text>
        <dbReference type="Rhea" id="RHEA:23032"/>
        <dbReference type="ChEBI" id="CHEBI:15378"/>
        <dbReference type="ChEBI" id="CHEBI:30616"/>
        <dbReference type="ChEBI" id="CHEBI:43474"/>
        <dbReference type="ChEBI" id="CHEBI:137981"/>
        <dbReference type="ChEBI" id="CHEBI:147287"/>
        <dbReference type="ChEBI" id="CHEBI:456216"/>
        <dbReference type="EC" id="6.3.3.1"/>
    </reaction>
</comment>
<comment type="pathway">
    <text evidence="1">Purine metabolism; IMP biosynthesis via de novo pathway; 5-amino-1-(5-phospho-D-ribosyl)imidazole from N(2)-formyl-N(1)-(5-phospho-D-ribosyl)glycinamide: step 2/2.</text>
</comment>
<comment type="subcellular location">
    <subcellularLocation>
        <location evidence="1">Cytoplasm</location>
    </subcellularLocation>
</comment>
<comment type="similarity">
    <text evidence="1">Belongs to the AIR synthase family.</text>
</comment>
<reference key="1">
    <citation type="submission" date="2007-10" db="EMBL/GenBank/DDBJ databases">
        <title>Complete sequence of Shewanella pealeana ATCC 700345.</title>
        <authorList>
            <consortium name="US DOE Joint Genome Institute"/>
            <person name="Copeland A."/>
            <person name="Lucas S."/>
            <person name="Lapidus A."/>
            <person name="Barry K."/>
            <person name="Glavina del Rio T."/>
            <person name="Dalin E."/>
            <person name="Tice H."/>
            <person name="Pitluck S."/>
            <person name="Chertkov O."/>
            <person name="Brettin T."/>
            <person name="Bruce D."/>
            <person name="Detter J.C."/>
            <person name="Han C."/>
            <person name="Schmutz J."/>
            <person name="Larimer F."/>
            <person name="Land M."/>
            <person name="Hauser L."/>
            <person name="Kyrpides N."/>
            <person name="Kim E."/>
            <person name="Zhao J.-S.Z."/>
            <person name="Manno D."/>
            <person name="Hawari J."/>
            <person name="Richardson P."/>
        </authorList>
    </citation>
    <scope>NUCLEOTIDE SEQUENCE [LARGE SCALE GENOMIC DNA]</scope>
    <source>
        <strain>ATCC 700345 / ANG-SQ1</strain>
    </source>
</reference>
<organism>
    <name type="scientific">Shewanella pealeana (strain ATCC 700345 / ANG-SQ1)</name>
    <dbReference type="NCBI Taxonomy" id="398579"/>
    <lineage>
        <taxon>Bacteria</taxon>
        <taxon>Pseudomonadati</taxon>
        <taxon>Pseudomonadota</taxon>
        <taxon>Gammaproteobacteria</taxon>
        <taxon>Alteromonadales</taxon>
        <taxon>Shewanellaceae</taxon>
        <taxon>Shewanella</taxon>
    </lineage>
</organism>
<name>PUR5_SHEPA</name>
<gene>
    <name evidence="1" type="primary">purM</name>
    <name type="ordered locus">Spea_2577</name>
</gene>
<sequence>MSTPTTPLSYKDAGVDIDAGNALVNNIKSAVKRTRRPEVMGNLGGFGALCELPTKYKHPVLVSGTDGVGTKLRLAIDYKKHDNVGVDLVAMCSNDLIVSGAEPLFFLDYYATGKLDVEVATAVVKGIAEGCVQSGCALIGGETAEMPGMYEGDDYDLAGFCVGVVEKEEIIDGTKVQDGDALIALASSGPHSNGFSLIRKVLEVSKADPAQELAGKPLIDHLLEPTKIYVKSLLKLLEQHDVHAMSHITGGGFWENIPRVLPEDCKAVVKSDSWQWPVVFNWLMENGNISEFEMYRTFNCGVGMVVALPADKVDSALELLTAEGENAWLIGNIAKRNGEEEQVEIL</sequence>
<proteinExistence type="inferred from homology"/>
<feature type="chain" id="PRO_1000148296" description="Phosphoribosylformylglycinamidine cyclo-ligase">
    <location>
        <begin position="1"/>
        <end position="346"/>
    </location>
</feature>
<evidence type="ECO:0000255" key="1">
    <source>
        <dbReference type="HAMAP-Rule" id="MF_00741"/>
    </source>
</evidence>
<accession>A8H5R0</accession>
<protein>
    <recommendedName>
        <fullName evidence="1">Phosphoribosylformylglycinamidine cyclo-ligase</fullName>
        <ecNumber evidence="1">6.3.3.1</ecNumber>
    </recommendedName>
    <alternativeName>
        <fullName evidence="1">AIR synthase</fullName>
    </alternativeName>
    <alternativeName>
        <fullName evidence="1">AIRS</fullName>
    </alternativeName>
    <alternativeName>
        <fullName evidence="1">Phosphoribosyl-aminoimidazole synthetase</fullName>
    </alternativeName>
</protein>
<keyword id="KW-0067">ATP-binding</keyword>
<keyword id="KW-0963">Cytoplasm</keyword>
<keyword id="KW-0436">Ligase</keyword>
<keyword id="KW-0547">Nucleotide-binding</keyword>
<keyword id="KW-0658">Purine biosynthesis</keyword>
<keyword id="KW-1185">Reference proteome</keyword>